<reference key="1">
    <citation type="journal article" date="2006" name="Nucleic Acids Res.">
        <title>Ancient origin, functional conservation and fast evolution of DNA-dependent RNA polymerase III.</title>
        <authorList>
            <person name="Proshkina G.M."/>
            <person name="Shematorova E.K."/>
            <person name="Proshkin S.A."/>
            <person name="Zaros C."/>
            <person name="Thuriaux P."/>
            <person name="Shpakovski G.V."/>
        </authorList>
    </citation>
    <scope>NUCLEOTIDE SEQUENCE [MRNA]</scope>
    <scope>FUNCTION</scope>
    <source>
        <strain>972 / ATCC 24843</strain>
    </source>
</reference>
<reference key="2">
    <citation type="journal article" date="2002" name="Nature">
        <title>The genome sequence of Schizosaccharomyces pombe.</title>
        <authorList>
            <person name="Wood V."/>
            <person name="Gwilliam R."/>
            <person name="Rajandream M.A."/>
            <person name="Lyne M.H."/>
            <person name="Lyne R."/>
            <person name="Stewart A."/>
            <person name="Sgouros J.G."/>
            <person name="Peat N."/>
            <person name="Hayles J."/>
            <person name="Baker S.G."/>
            <person name="Basham D."/>
            <person name="Bowman S."/>
            <person name="Brooks K."/>
            <person name="Brown D."/>
            <person name="Brown S."/>
            <person name="Chillingworth T."/>
            <person name="Churcher C.M."/>
            <person name="Collins M."/>
            <person name="Connor R."/>
            <person name="Cronin A."/>
            <person name="Davis P."/>
            <person name="Feltwell T."/>
            <person name="Fraser A."/>
            <person name="Gentles S."/>
            <person name="Goble A."/>
            <person name="Hamlin N."/>
            <person name="Harris D.E."/>
            <person name="Hidalgo J."/>
            <person name="Hodgson G."/>
            <person name="Holroyd S."/>
            <person name="Hornsby T."/>
            <person name="Howarth S."/>
            <person name="Huckle E.J."/>
            <person name="Hunt S."/>
            <person name="Jagels K."/>
            <person name="James K.D."/>
            <person name="Jones L."/>
            <person name="Jones M."/>
            <person name="Leather S."/>
            <person name="McDonald S."/>
            <person name="McLean J."/>
            <person name="Mooney P."/>
            <person name="Moule S."/>
            <person name="Mungall K.L."/>
            <person name="Murphy L.D."/>
            <person name="Niblett D."/>
            <person name="Odell C."/>
            <person name="Oliver K."/>
            <person name="O'Neil S."/>
            <person name="Pearson D."/>
            <person name="Quail M.A."/>
            <person name="Rabbinowitsch E."/>
            <person name="Rutherford K.M."/>
            <person name="Rutter S."/>
            <person name="Saunders D."/>
            <person name="Seeger K."/>
            <person name="Sharp S."/>
            <person name="Skelton J."/>
            <person name="Simmonds M.N."/>
            <person name="Squares R."/>
            <person name="Squares S."/>
            <person name="Stevens K."/>
            <person name="Taylor K."/>
            <person name="Taylor R.G."/>
            <person name="Tivey A."/>
            <person name="Walsh S.V."/>
            <person name="Warren T."/>
            <person name="Whitehead S."/>
            <person name="Woodward J.R."/>
            <person name="Volckaert G."/>
            <person name="Aert R."/>
            <person name="Robben J."/>
            <person name="Grymonprez B."/>
            <person name="Weltjens I."/>
            <person name="Vanstreels E."/>
            <person name="Rieger M."/>
            <person name="Schaefer M."/>
            <person name="Mueller-Auer S."/>
            <person name="Gabel C."/>
            <person name="Fuchs M."/>
            <person name="Duesterhoeft A."/>
            <person name="Fritzc C."/>
            <person name="Holzer E."/>
            <person name="Moestl D."/>
            <person name="Hilbert H."/>
            <person name="Borzym K."/>
            <person name="Langer I."/>
            <person name="Beck A."/>
            <person name="Lehrach H."/>
            <person name="Reinhardt R."/>
            <person name="Pohl T.M."/>
            <person name="Eger P."/>
            <person name="Zimmermann W."/>
            <person name="Wedler H."/>
            <person name="Wambutt R."/>
            <person name="Purnelle B."/>
            <person name="Goffeau A."/>
            <person name="Cadieu E."/>
            <person name="Dreano S."/>
            <person name="Gloux S."/>
            <person name="Lelaure V."/>
            <person name="Mottier S."/>
            <person name="Galibert F."/>
            <person name="Aves S.J."/>
            <person name="Xiang Z."/>
            <person name="Hunt C."/>
            <person name="Moore K."/>
            <person name="Hurst S.M."/>
            <person name="Lucas M."/>
            <person name="Rochet M."/>
            <person name="Gaillardin C."/>
            <person name="Tallada V.A."/>
            <person name="Garzon A."/>
            <person name="Thode G."/>
            <person name="Daga R.R."/>
            <person name="Cruzado L."/>
            <person name="Jimenez J."/>
            <person name="Sanchez M."/>
            <person name="del Rey F."/>
            <person name="Benito J."/>
            <person name="Dominguez A."/>
            <person name="Revuelta J.L."/>
            <person name="Moreno S."/>
            <person name="Armstrong J."/>
            <person name="Forsburg S.L."/>
            <person name="Cerutti L."/>
            <person name="Lowe T."/>
            <person name="McCombie W.R."/>
            <person name="Paulsen I."/>
            <person name="Potashkin J."/>
            <person name="Shpakovski G.V."/>
            <person name="Ussery D."/>
            <person name="Barrell B.G."/>
            <person name="Nurse P."/>
        </authorList>
    </citation>
    <scope>NUCLEOTIDE SEQUENCE [LARGE SCALE GENOMIC DNA]</scope>
    <source>
        <strain>972 / ATCC 24843</strain>
    </source>
</reference>
<reference key="3">
    <citation type="journal article" date="2006" name="Nat. Biotechnol.">
        <title>ORFeome cloning and global analysis of protein localization in the fission yeast Schizosaccharomyces pombe.</title>
        <authorList>
            <person name="Matsuyama A."/>
            <person name="Arai R."/>
            <person name="Yashiroda Y."/>
            <person name="Shirai A."/>
            <person name="Kamata A."/>
            <person name="Sekido S."/>
            <person name="Kobayashi Y."/>
            <person name="Hashimoto A."/>
            <person name="Hamamoto M."/>
            <person name="Hiraoka Y."/>
            <person name="Horinouchi S."/>
            <person name="Yoshida M."/>
        </authorList>
    </citation>
    <scope>SUBCELLULAR LOCATION [LARGE SCALE ANALYSIS]</scope>
</reference>
<name>RPC9_SCHPO</name>
<proteinExistence type="evidence at protein level"/>
<gene>
    <name type="primary">rpc17</name>
    <name type="ORF">SPAPB1E7.10</name>
</gene>
<comment type="function">
    <text evidence="2">DNA-dependent RNA polymerase catalyzes the transcription of DNA into RNA using the four ribonucleoside triphosphates as substrates. Specific peripheric component of RNA polymerase III which synthesizes small RNAs, such as 5S rRNA and tRNAs.</text>
</comment>
<comment type="subunit">
    <text>Component of the RNA polymerase III (Pol III) complex.</text>
</comment>
<comment type="subcellular location">
    <subcellularLocation>
        <location evidence="1">Cytoplasm</location>
    </subcellularLocation>
    <subcellularLocation>
        <location evidence="1">Nucleus</location>
    </subcellularLocation>
</comment>
<comment type="similarity">
    <text evidence="3">Belongs to the eukaryotic RPC9 RNA polymerase subunit family.</text>
</comment>
<organism>
    <name type="scientific">Schizosaccharomyces pombe (strain 972 / ATCC 24843)</name>
    <name type="common">Fission yeast</name>
    <dbReference type="NCBI Taxonomy" id="284812"/>
    <lineage>
        <taxon>Eukaryota</taxon>
        <taxon>Fungi</taxon>
        <taxon>Dikarya</taxon>
        <taxon>Ascomycota</taxon>
        <taxon>Taphrinomycotina</taxon>
        <taxon>Schizosaccharomycetes</taxon>
        <taxon>Schizosaccharomycetales</taxon>
        <taxon>Schizosaccharomycetaceae</taxon>
        <taxon>Schizosaccharomyces</taxon>
    </lineage>
</organism>
<protein>
    <recommendedName>
        <fullName>DNA-directed RNA polymerase III subunit rpc9</fullName>
        <shortName>RNA polymerase III subunit C9</shortName>
    </recommendedName>
    <alternativeName>
        <fullName>RNA polymerase III subunit C17</fullName>
    </alternativeName>
</protein>
<evidence type="ECO:0000269" key="1">
    <source>
    </source>
</evidence>
<evidence type="ECO:0000269" key="2">
    <source>
    </source>
</evidence>
<evidence type="ECO:0000305" key="3"/>
<evidence type="ECO:0007829" key="4">
    <source>
        <dbReference type="PDB" id="3AYH"/>
    </source>
</evidence>
<dbReference type="EMBL" id="DQ156220">
    <property type="protein sequence ID" value="ABA54848.1"/>
    <property type="molecule type" value="mRNA"/>
</dbReference>
<dbReference type="EMBL" id="CU329670">
    <property type="protein sequence ID" value="CAC36927.1"/>
    <property type="molecule type" value="Genomic_DNA"/>
</dbReference>
<dbReference type="RefSeq" id="NP_594136.1">
    <property type="nucleotide sequence ID" value="NM_001019560.2"/>
</dbReference>
<dbReference type="PDB" id="3AYH">
    <property type="method" value="X-ray"/>
    <property type="resolution" value="2.19 A"/>
    <property type="chains" value="A=1-129"/>
</dbReference>
<dbReference type="PDBsum" id="3AYH"/>
<dbReference type="SMR" id="Q9C0Z9"/>
<dbReference type="BioGRID" id="280067">
    <property type="interactions" value="4"/>
</dbReference>
<dbReference type="ComplexPortal" id="CPX-8905">
    <property type="entry name" value="DNA-directed RNA polymerase III complex"/>
</dbReference>
<dbReference type="FunCoup" id="Q9C0Z9">
    <property type="interactions" value="106"/>
</dbReference>
<dbReference type="STRING" id="284812.Q9C0Z9"/>
<dbReference type="PaxDb" id="4896-SPAPB1E7.10.1"/>
<dbReference type="EnsemblFungi" id="SPAPB1E7.10.1">
    <property type="protein sequence ID" value="SPAPB1E7.10.1:pep"/>
    <property type="gene ID" value="SPAPB1E7.10"/>
</dbReference>
<dbReference type="GeneID" id="2543653"/>
<dbReference type="KEGG" id="spo:2543653"/>
<dbReference type="PomBase" id="SPAPB1E7.10">
    <property type="gene designation" value="rpc17"/>
</dbReference>
<dbReference type="VEuPathDB" id="FungiDB:SPAPB1E7.10"/>
<dbReference type="eggNOG" id="KOG4168">
    <property type="taxonomic scope" value="Eukaryota"/>
</dbReference>
<dbReference type="HOGENOM" id="CLU_092529_3_1_1"/>
<dbReference type="InParanoid" id="Q9C0Z9"/>
<dbReference type="OMA" id="VMIINLR"/>
<dbReference type="PhylomeDB" id="Q9C0Z9"/>
<dbReference type="Reactome" id="R-SPO-76061">
    <property type="pathway name" value="RNA Polymerase III Transcription Initiation From Type 1 Promoter"/>
</dbReference>
<dbReference type="Reactome" id="R-SPO-76066">
    <property type="pathway name" value="RNA Polymerase III Transcription Initiation From Type 2 Promoter"/>
</dbReference>
<dbReference type="EvolutionaryTrace" id="Q9C0Z9"/>
<dbReference type="PRO" id="PR:Q9C0Z9"/>
<dbReference type="Proteomes" id="UP000002485">
    <property type="component" value="Chromosome I"/>
</dbReference>
<dbReference type="GO" id="GO:0005829">
    <property type="term" value="C:cytosol"/>
    <property type="evidence" value="ECO:0007005"/>
    <property type="project" value="PomBase"/>
</dbReference>
<dbReference type="GO" id="GO:0005634">
    <property type="term" value="C:nucleus"/>
    <property type="evidence" value="ECO:0007005"/>
    <property type="project" value="PomBase"/>
</dbReference>
<dbReference type="GO" id="GO:0005666">
    <property type="term" value="C:RNA polymerase III complex"/>
    <property type="evidence" value="ECO:0000316"/>
    <property type="project" value="PomBase"/>
</dbReference>
<dbReference type="GO" id="GO:0003899">
    <property type="term" value="F:DNA-directed RNA polymerase activity"/>
    <property type="evidence" value="ECO:0000316"/>
    <property type="project" value="PomBase"/>
</dbReference>
<dbReference type="GO" id="GO:0000166">
    <property type="term" value="F:nucleotide binding"/>
    <property type="evidence" value="ECO:0007669"/>
    <property type="project" value="InterPro"/>
</dbReference>
<dbReference type="GO" id="GO:0006384">
    <property type="term" value="P:transcription initiation at RNA polymerase III promoter"/>
    <property type="evidence" value="ECO:0000316"/>
    <property type="project" value="PomBase"/>
</dbReference>
<dbReference type="FunFam" id="1.20.1250.40:FF:000020">
    <property type="entry name" value="DNA-directed RNA polymerase III subunit rpc9"/>
    <property type="match status" value="1"/>
</dbReference>
<dbReference type="Gene3D" id="1.20.1250.40">
    <property type="match status" value="1"/>
</dbReference>
<dbReference type="InterPro" id="IPR010997">
    <property type="entry name" value="HRDC-like_sf"/>
</dbReference>
<dbReference type="InterPro" id="IPR006590">
    <property type="entry name" value="RNA_pol_Rpb4/RPC9_core"/>
</dbReference>
<dbReference type="InterPro" id="IPR005574">
    <property type="entry name" value="Rpb4/RPC9"/>
</dbReference>
<dbReference type="InterPro" id="IPR038324">
    <property type="entry name" value="Rpb4/RPC9_sf"/>
</dbReference>
<dbReference type="InterPro" id="IPR038846">
    <property type="entry name" value="RPC9"/>
</dbReference>
<dbReference type="PANTHER" id="PTHR15561">
    <property type="entry name" value="CALCITONIN GENE-RELATED PEPTIDE-RECEPTOR COMPONENT PROTEIN"/>
    <property type="match status" value="1"/>
</dbReference>
<dbReference type="PANTHER" id="PTHR15561:SF0">
    <property type="entry name" value="DNA-DIRECTED RNA POLYMERASE III SUBUNIT RPC9"/>
    <property type="match status" value="1"/>
</dbReference>
<dbReference type="Pfam" id="PF03874">
    <property type="entry name" value="RNA_pol_Rpb4"/>
    <property type="match status" value="1"/>
</dbReference>
<dbReference type="SMART" id="SM00657">
    <property type="entry name" value="RPOL4c"/>
    <property type="match status" value="1"/>
</dbReference>
<dbReference type="SUPFAM" id="SSF47819">
    <property type="entry name" value="HRDC-like"/>
    <property type="match status" value="1"/>
</dbReference>
<sequence>MKVLEARDAYLTNAEVFFHLKEMENEQNARTQERGAAQALVCENLRTIQFEILKYLSSQGNCEGLTKERFLDCIAIFNEFELTKAEILVILNNKPSSVPELYACIEGIEERFKEEDIFKLVEKINTTFP</sequence>
<keyword id="KW-0002">3D-structure</keyword>
<keyword id="KW-0963">Cytoplasm</keyword>
<keyword id="KW-0240">DNA-directed RNA polymerase</keyword>
<keyword id="KW-0539">Nucleus</keyword>
<keyword id="KW-1185">Reference proteome</keyword>
<keyword id="KW-0804">Transcription</keyword>
<feature type="chain" id="PRO_0000352805" description="DNA-directed RNA polymerase III subunit rpc9">
    <location>
        <begin position="1"/>
        <end position="129"/>
    </location>
</feature>
<feature type="strand" evidence="4">
    <location>
        <begin position="2"/>
        <end position="11"/>
    </location>
</feature>
<feature type="helix" evidence="4">
    <location>
        <begin position="13"/>
        <end position="34"/>
    </location>
</feature>
<feature type="helix" evidence="4">
    <location>
        <begin position="35"/>
        <end position="38"/>
    </location>
</feature>
<feature type="helix" evidence="4">
    <location>
        <begin position="43"/>
        <end position="57"/>
    </location>
</feature>
<feature type="turn" evidence="4">
    <location>
        <begin position="58"/>
        <end position="60"/>
    </location>
</feature>
<feature type="helix" evidence="4">
    <location>
        <begin position="67"/>
        <end position="75"/>
    </location>
</feature>
<feature type="turn" evidence="4">
    <location>
        <begin position="76"/>
        <end position="80"/>
    </location>
</feature>
<feature type="helix" evidence="4">
    <location>
        <begin position="84"/>
        <end position="93"/>
    </location>
</feature>
<feature type="helix" evidence="4">
    <location>
        <begin position="98"/>
        <end position="104"/>
    </location>
</feature>
<feature type="helix" evidence="4">
    <location>
        <begin position="108"/>
        <end position="112"/>
    </location>
</feature>
<feature type="turn" evidence="4">
    <location>
        <begin position="113"/>
        <end position="116"/>
    </location>
</feature>
<feature type="helix" evidence="4">
    <location>
        <begin position="117"/>
        <end position="127"/>
    </location>
</feature>
<accession>Q9C0Z9</accession>